<accession>Q0TQH4</accession>
<feature type="chain" id="PRO_1000050127" description="Pyrrolidone-carboxylate peptidase">
    <location>
        <begin position="1"/>
        <end position="213"/>
    </location>
</feature>
<feature type="active site" evidence="1">
    <location>
        <position position="78"/>
    </location>
</feature>
<feature type="active site" evidence="1">
    <location>
        <position position="141"/>
    </location>
</feature>
<feature type="active site" evidence="1">
    <location>
        <position position="165"/>
    </location>
</feature>
<evidence type="ECO:0000255" key="1">
    <source>
        <dbReference type="HAMAP-Rule" id="MF_00417"/>
    </source>
</evidence>
<gene>
    <name evidence="1" type="primary">pcp</name>
    <name type="ordered locus">CPF_1678</name>
</gene>
<dbReference type="EC" id="3.4.19.3" evidence="1"/>
<dbReference type="EMBL" id="CP000246">
    <property type="protein sequence ID" value="ABG84412.1"/>
    <property type="molecule type" value="Genomic_DNA"/>
</dbReference>
<dbReference type="RefSeq" id="WP_003463757.1">
    <property type="nucleotide sequence ID" value="NC_008261.1"/>
</dbReference>
<dbReference type="SMR" id="Q0TQH4"/>
<dbReference type="STRING" id="195103.CPF_1678"/>
<dbReference type="MEROPS" id="C15.001"/>
<dbReference type="PaxDb" id="195103-CPF_1678"/>
<dbReference type="KEGG" id="cpf:CPF_1678"/>
<dbReference type="eggNOG" id="COG2039">
    <property type="taxonomic scope" value="Bacteria"/>
</dbReference>
<dbReference type="HOGENOM" id="CLU_043960_4_0_9"/>
<dbReference type="Proteomes" id="UP000001823">
    <property type="component" value="Chromosome"/>
</dbReference>
<dbReference type="GO" id="GO:0005829">
    <property type="term" value="C:cytosol"/>
    <property type="evidence" value="ECO:0007669"/>
    <property type="project" value="InterPro"/>
</dbReference>
<dbReference type="GO" id="GO:0016920">
    <property type="term" value="F:pyroglutamyl-peptidase activity"/>
    <property type="evidence" value="ECO:0007669"/>
    <property type="project" value="UniProtKB-UniRule"/>
</dbReference>
<dbReference type="GO" id="GO:0006508">
    <property type="term" value="P:proteolysis"/>
    <property type="evidence" value="ECO:0007669"/>
    <property type="project" value="UniProtKB-KW"/>
</dbReference>
<dbReference type="CDD" id="cd00501">
    <property type="entry name" value="Peptidase_C15"/>
    <property type="match status" value="1"/>
</dbReference>
<dbReference type="FunFam" id="3.40.630.20:FF:000001">
    <property type="entry name" value="Pyrrolidone-carboxylate peptidase"/>
    <property type="match status" value="1"/>
</dbReference>
<dbReference type="Gene3D" id="3.40.630.20">
    <property type="entry name" value="Peptidase C15, pyroglutamyl peptidase I-like"/>
    <property type="match status" value="1"/>
</dbReference>
<dbReference type="HAMAP" id="MF_00417">
    <property type="entry name" value="Pyrrolid_peptidase"/>
    <property type="match status" value="1"/>
</dbReference>
<dbReference type="InterPro" id="IPR000816">
    <property type="entry name" value="Peptidase_C15"/>
</dbReference>
<dbReference type="InterPro" id="IPR016125">
    <property type="entry name" value="Peptidase_C15-like"/>
</dbReference>
<dbReference type="InterPro" id="IPR036440">
    <property type="entry name" value="Peptidase_C15-like_sf"/>
</dbReference>
<dbReference type="InterPro" id="IPR029762">
    <property type="entry name" value="PGP-I_bact-type"/>
</dbReference>
<dbReference type="InterPro" id="IPR033694">
    <property type="entry name" value="PGPEP1_Cys_AS"/>
</dbReference>
<dbReference type="InterPro" id="IPR033693">
    <property type="entry name" value="PGPEP1_Glu_AS"/>
</dbReference>
<dbReference type="NCBIfam" id="NF009676">
    <property type="entry name" value="PRK13197.1"/>
    <property type="match status" value="1"/>
</dbReference>
<dbReference type="NCBIfam" id="TIGR00504">
    <property type="entry name" value="pyro_pdase"/>
    <property type="match status" value="1"/>
</dbReference>
<dbReference type="PANTHER" id="PTHR23402">
    <property type="entry name" value="PROTEASE FAMILY C15 PYROGLUTAMYL-PEPTIDASE I-RELATED"/>
    <property type="match status" value="1"/>
</dbReference>
<dbReference type="PANTHER" id="PTHR23402:SF1">
    <property type="entry name" value="PYROGLUTAMYL-PEPTIDASE I"/>
    <property type="match status" value="1"/>
</dbReference>
<dbReference type="Pfam" id="PF01470">
    <property type="entry name" value="Peptidase_C15"/>
    <property type="match status" value="1"/>
</dbReference>
<dbReference type="PIRSF" id="PIRSF015592">
    <property type="entry name" value="Prld-crbxl_pptds"/>
    <property type="match status" value="1"/>
</dbReference>
<dbReference type="PRINTS" id="PR00706">
    <property type="entry name" value="PYROGLUPTASE"/>
</dbReference>
<dbReference type="SUPFAM" id="SSF53182">
    <property type="entry name" value="Pyrrolidone carboxyl peptidase (pyroglutamate aminopeptidase)"/>
    <property type="match status" value="1"/>
</dbReference>
<dbReference type="PROSITE" id="PS01334">
    <property type="entry name" value="PYRASE_CYS"/>
    <property type="match status" value="1"/>
</dbReference>
<dbReference type="PROSITE" id="PS01333">
    <property type="entry name" value="PYRASE_GLU"/>
    <property type="match status" value="1"/>
</dbReference>
<organism>
    <name type="scientific">Clostridium perfringens (strain ATCC 13124 / DSM 756 / JCM 1290 / NCIMB 6125 / NCTC 8237 / Type A)</name>
    <dbReference type="NCBI Taxonomy" id="195103"/>
    <lineage>
        <taxon>Bacteria</taxon>
        <taxon>Bacillati</taxon>
        <taxon>Bacillota</taxon>
        <taxon>Clostridia</taxon>
        <taxon>Eubacteriales</taxon>
        <taxon>Clostridiaceae</taxon>
        <taxon>Clostridium</taxon>
    </lineage>
</organism>
<name>PCP_CLOP1</name>
<proteinExistence type="inferred from homology"/>
<sequence length="213" mass="23193">MKVLITGFDPFGGESINPALEAVKMIPENIEGAQVIKLEIPTVFRKSLEKIEEKIEEINPDVVISIGQAGGRFGVTPERVAINMDDARIEDNEGNQPIDISIYEDGESAYFSNLPIKAMVKEMVDNGIPASVSNTAGTFVCNHVMYGVLYLVNKKYKNIRAGFIHVPYIPTQVVNKPNTPSMSINDIAKGLELSIKAIVLNDNDIKTVGGAVC</sequence>
<keyword id="KW-0963">Cytoplasm</keyword>
<keyword id="KW-0378">Hydrolase</keyword>
<keyword id="KW-0645">Protease</keyword>
<keyword id="KW-0788">Thiol protease</keyword>
<comment type="function">
    <text evidence="1">Removes 5-oxoproline from various penultimate amino acid residues except L-proline.</text>
</comment>
<comment type="catalytic activity">
    <reaction evidence="1">
        <text>Release of an N-terminal pyroglutamyl group from a polypeptide, the second amino acid generally not being Pro.</text>
        <dbReference type="EC" id="3.4.19.3"/>
    </reaction>
</comment>
<comment type="subunit">
    <text evidence="1">Homotetramer.</text>
</comment>
<comment type="subcellular location">
    <subcellularLocation>
        <location evidence="1">Cytoplasm</location>
    </subcellularLocation>
</comment>
<comment type="similarity">
    <text evidence="1">Belongs to the peptidase C15 family.</text>
</comment>
<protein>
    <recommendedName>
        <fullName evidence="1">Pyrrolidone-carboxylate peptidase</fullName>
        <ecNumber evidence="1">3.4.19.3</ecNumber>
    </recommendedName>
    <alternativeName>
        <fullName evidence="1">5-oxoprolyl-peptidase</fullName>
    </alternativeName>
    <alternativeName>
        <fullName evidence="1">Pyroglutamyl-peptidase I</fullName>
        <shortName evidence="1">PGP-I</shortName>
        <shortName evidence="1">Pyrase</shortName>
    </alternativeName>
</protein>
<reference key="1">
    <citation type="journal article" date="2006" name="Genome Res.">
        <title>Skewed genomic variability in strains of the toxigenic bacterial pathogen, Clostridium perfringens.</title>
        <authorList>
            <person name="Myers G.S.A."/>
            <person name="Rasko D.A."/>
            <person name="Cheung J.K."/>
            <person name="Ravel J."/>
            <person name="Seshadri R."/>
            <person name="DeBoy R.T."/>
            <person name="Ren Q."/>
            <person name="Varga J."/>
            <person name="Awad M.M."/>
            <person name="Brinkac L.M."/>
            <person name="Daugherty S.C."/>
            <person name="Haft D.H."/>
            <person name="Dodson R.J."/>
            <person name="Madupu R."/>
            <person name="Nelson W.C."/>
            <person name="Rosovitz M.J."/>
            <person name="Sullivan S.A."/>
            <person name="Khouri H."/>
            <person name="Dimitrov G.I."/>
            <person name="Watkins K.L."/>
            <person name="Mulligan S."/>
            <person name="Benton J."/>
            <person name="Radune D."/>
            <person name="Fisher D.J."/>
            <person name="Atkins H.S."/>
            <person name="Hiscox T."/>
            <person name="Jost B.H."/>
            <person name="Billington S.J."/>
            <person name="Songer J.G."/>
            <person name="McClane B.A."/>
            <person name="Titball R.W."/>
            <person name="Rood J.I."/>
            <person name="Melville S.B."/>
            <person name="Paulsen I.T."/>
        </authorList>
    </citation>
    <scope>NUCLEOTIDE SEQUENCE [LARGE SCALE GENOMIC DNA]</scope>
    <source>
        <strain>ATCC 13124 / DSM 756 / JCM 1290 / NCIMB 6125 / NCTC 8237 / S 107 / Type A</strain>
    </source>
</reference>